<keyword id="KW-0004">4Fe-4S</keyword>
<keyword id="KW-1003">Cell membrane</keyword>
<keyword id="KW-0408">Iron</keyword>
<keyword id="KW-0411">Iron-sulfur</keyword>
<keyword id="KW-0472">Membrane</keyword>
<keyword id="KW-0479">Metal-binding</keyword>
<keyword id="KW-0520">NAD</keyword>
<keyword id="KW-0874">Quinone</keyword>
<keyword id="KW-1185">Reference proteome</keyword>
<keyword id="KW-0677">Repeat</keyword>
<keyword id="KW-1278">Translocase</keyword>
<keyword id="KW-0812">Transmembrane</keyword>
<keyword id="KW-1133">Transmembrane helix</keyword>
<keyword id="KW-0830">Ubiquinone</keyword>
<reference key="1">
    <citation type="journal article" date="2004" name="Proc. Natl. Acad. Sci. U.S.A.">
        <title>The complete genomic sequence of Nocardia farcinica IFM 10152.</title>
        <authorList>
            <person name="Ishikawa J."/>
            <person name="Yamashita A."/>
            <person name="Mikami Y."/>
            <person name="Hoshino Y."/>
            <person name="Kurita H."/>
            <person name="Hotta K."/>
            <person name="Shiba T."/>
            <person name="Hattori M."/>
        </authorList>
    </citation>
    <scope>NUCLEOTIDE SEQUENCE [LARGE SCALE GENOMIC DNA]</scope>
    <source>
        <strain>IFM 10152</strain>
    </source>
</reference>
<name>NUOHI_NOCFA</name>
<dbReference type="EC" id="7.1.1.-"/>
<dbReference type="EMBL" id="AP006618">
    <property type="protein sequence ID" value="BAD57507.1"/>
    <property type="molecule type" value="Genomic_DNA"/>
</dbReference>
<dbReference type="RefSeq" id="WP_011209192.1">
    <property type="nucleotide sequence ID" value="NC_006361.1"/>
</dbReference>
<dbReference type="SMR" id="Q5YWD4"/>
<dbReference type="STRING" id="247156.NFA_26600"/>
<dbReference type="GeneID" id="61133401"/>
<dbReference type="KEGG" id="nfa:NFA_26600"/>
<dbReference type="eggNOG" id="COG1005">
    <property type="taxonomic scope" value="Bacteria"/>
</dbReference>
<dbReference type="eggNOG" id="COG1143">
    <property type="taxonomic scope" value="Bacteria"/>
</dbReference>
<dbReference type="HOGENOM" id="CLU_015134_8_0_11"/>
<dbReference type="OrthoDB" id="9803734at2"/>
<dbReference type="Proteomes" id="UP000006820">
    <property type="component" value="Chromosome"/>
</dbReference>
<dbReference type="GO" id="GO:0005886">
    <property type="term" value="C:plasma membrane"/>
    <property type="evidence" value="ECO:0007669"/>
    <property type="project" value="UniProtKB-SubCell"/>
</dbReference>
<dbReference type="GO" id="GO:0051539">
    <property type="term" value="F:4 iron, 4 sulfur cluster binding"/>
    <property type="evidence" value="ECO:0007669"/>
    <property type="project" value="UniProtKB-KW"/>
</dbReference>
<dbReference type="GO" id="GO:0005506">
    <property type="term" value="F:iron ion binding"/>
    <property type="evidence" value="ECO:0007669"/>
    <property type="project" value="UniProtKB-UniRule"/>
</dbReference>
<dbReference type="GO" id="GO:0050136">
    <property type="term" value="F:NADH:ubiquinone reductase (non-electrogenic) activity"/>
    <property type="evidence" value="ECO:0007669"/>
    <property type="project" value="UniProtKB-UniRule"/>
</dbReference>
<dbReference type="GO" id="GO:0048038">
    <property type="term" value="F:quinone binding"/>
    <property type="evidence" value="ECO:0007669"/>
    <property type="project" value="UniProtKB-KW"/>
</dbReference>
<dbReference type="GO" id="GO:0009060">
    <property type="term" value="P:aerobic respiration"/>
    <property type="evidence" value="ECO:0007669"/>
    <property type="project" value="TreeGrafter"/>
</dbReference>
<dbReference type="FunFam" id="3.30.70.3270:FF:000007">
    <property type="entry name" value="NADH-quinone oxidoreductase subunit I"/>
    <property type="match status" value="1"/>
</dbReference>
<dbReference type="Gene3D" id="3.30.70.3270">
    <property type="match status" value="1"/>
</dbReference>
<dbReference type="HAMAP" id="MF_01350">
    <property type="entry name" value="NDH1_NuoH"/>
    <property type="match status" value="1"/>
</dbReference>
<dbReference type="HAMAP" id="MF_01351">
    <property type="entry name" value="NDH1_NuoI"/>
    <property type="match status" value="1"/>
</dbReference>
<dbReference type="InterPro" id="IPR017896">
    <property type="entry name" value="4Fe4S_Fe-S-bd"/>
</dbReference>
<dbReference type="InterPro" id="IPR017900">
    <property type="entry name" value="4Fe4S_Fe_S_CS"/>
</dbReference>
<dbReference type="InterPro" id="IPR010226">
    <property type="entry name" value="NADH_quinone_OxRdtase_chainI"/>
</dbReference>
<dbReference type="InterPro" id="IPR001694">
    <property type="entry name" value="NADH_UbQ_OxRdtase_su1/FPO"/>
</dbReference>
<dbReference type="InterPro" id="IPR018086">
    <property type="entry name" value="NADH_UbQ_OxRdtase_su1_CS"/>
</dbReference>
<dbReference type="NCBIfam" id="TIGR01971">
    <property type="entry name" value="NuoI"/>
    <property type="match status" value="1"/>
</dbReference>
<dbReference type="NCBIfam" id="NF004537">
    <property type="entry name" value="PRK05888.1-3"/>
    <property type="match status" value="1"/>
</dbReference>
<dbReference type="NCBIfam" id="NF004741">
    <property type="entry name" value="PRK06076.1-2"/>
    <property type="match status" value="1"/>
</dbReference>
<dbReference type="NCBIfam" id="NF004743">
    <property type="entry name" value="PRK06076.1-4"/>
    <property type="match status" value="1"/>
</dbReference>
<dbReference type="PANTHER" id="PTHR11432">
    <property type="entry name" value="NADH DEHYDROGENASE SUBUNIT 1"/>
    <property type="match status" value="1"/>
</dbReference>
<dbReference type="PANTHER" id="PTHR11432:SF3">
    <property type="entry name" value="NADH-UBIQUINONE OXIDOREDUCTASE CHAIN 1"/>
    <property type="match status" value="1"/>
</dbReference>
<dbReference type="Pfam" id="PF12838">
    <property type="entry name" value="Fer4_7"/>
    <property type="match status" value="1"/>
</dbReference>
<dbReference type="Pfam" id="PF00146">
    <property type="entry name" value="NADHdh"/>
    <property type="match status" value="1"/>
</dbReference>
<dbReference type="SUPFAM" id="SSF54862">
    <property type="entry name" value="4Fe-4S ferredoxins"/>
    <property type="match status" value="1"/>
</dbReference>
<dbReference type="PROSITE" id="PS00198">
    <property type="entry name" value="4FE4S_FER_1"/>
    <property type="match status" value="2"/>
</dbReference>
<dbReference type="PROSITE" id="PS51379">
    <property type="entry name" value="4FE4S_FER_2"/>
    <property type="match status" value="2"/>
</dbReference>
<dbReference type="PROSITE" id="PS00667">
    <property type="entry name" value="COMPLEX1_ND1_1"/>
    <property type="match status" value="1"/>
</dbReference>
<dbReference type="PROSITE" id="PS00668">
    <property type="entry name" value="COMPLEX1_ND1_2"/>
    <property type="match status" value="1"/>
</dbReference>
<gene>
    <name type="primary">nuoH/I</name>
    <name type="ordered locus">NFA_26600</name>
</gene>
<organism>
    <name type="scientific">Nocardia farcinica (strain IFM 10152)</name>
    <dbReference type="NCBI Taxonomy" id="247156"/>
    <lineage>
        <taxon>Bacteria</taxon>
        <taxon>Bacillati</taxon>
        <taxon>Actinomycetota</taxon>
        <taxon>Actinomycetes</taxon>
        <taxon>Mycobacteriales</taxon>
        <taxon>Nocardiaceae</taxon>
        <taxon>Nocardia</taxon>
    </lineage>
</organism>
<proteinExistence type="inferred from homology"/>
<evidence type="ECO:0000250" key="1"/>
<evidence type="ECO:0000255" key="2"/>
<evidence type="ECO:0000305" key="3"/>
<sequence>MPDLSLFGHDPFWLVVAKSVFLFVYIILIPLVAVLAERKVVARMQMRVGPNRVGPFGSLQSIADGVKMAFKEDLVPAIVDKPIYLLAPVVSVIPAFMAFAVIPLGGEVSVAGNTTALQLTDMPVGVLYILAITSIGVYGIVLAGWASGSTYPLLGGLRSTAQVISYEIAMALCFAAVFLHAGTMATSGIVGAQHPTWFVFLLLPSFLIYCVSMVGETNRAPFDLPEAEGELVGGFHTEYSSLKFAMFMLAEYVNMGTVSALATTLFLGGWSAPWPFNLIPGADAGWWGLLWFTAKVWTFMFVFVWLRGTLPRLRYDQFMRLGWQLLIPVSLLWVMLVATARLLRADGHAWATGAQVVVGVALTAAMIGLFLRAGRRPAAPPEPEPEPSGEAVFLGFPTPPVPADAHRVDNPKGGLLEPLAGFAVTAATMFKKPNTEFYPEQKVPTAPRYHGRHQLNRHPDGLEKCIGCELCAWACPADAIYVEGADNTEDERYSPGERYGRVYQINYLRCIGCGLCIEACPTRALTMTNDYELTDDNRADLIYEKDRLLAPLAPGMVAPPPAMAPGTTEADYYLGAVTGGAPAAEQPAPAGAKGGAR</sequence>
<accession>Q5YWD4</accession>
<feature type="chain" id="PRO_0000246072" description="NADH-quinone oxidoreductase subunits H/I">
    <location>
        <begin position="1"/>
        <end position="597"/>
    </location>
</feature>
<feature type="transmembrane region" description="Helical" evidence="2">
    <location>
        <begin position="12"/>
        <end position="32"/>
    </location>
</feature>
<feature type="transmembrane region" description="Helical" evidence="2">
    <location>
        <begin position="82"/>
        <end position="102"/>
    </location>
</feature>
<feature type="transmembrane region" description="Helical" evidence="2">
    <location>
        <begin position="124"/>
        <end position="144"/>
    </location>
</feature>
<feature type="transmembrane region" description="Helical" evidence="2">
    <location>
        <begin position="170"/>
        <end position="190"/>
    </location>
</feature>
<feature type="transmembrane region" description="Helical" evidence="2">
    <location>
        <begin position="195"/>
        <end position="215"/>
    </location>
</feature>
<feature type="transmembrane region" description="Helical" evidence="2">
    <location>
        <begin position="260"/>
        <end position="280"/>
    </location>
</feature>
<feature type="transmembrane region" description="Helical" evidence="2">
    <location>
        <begin position="286"/>
        <end position="306"/>
    </location>
</feature>
<feature type="transmembrane region" description="Helical" evidence="2">
    <location>
        <begin position="318"/>
        <end position="338"/>
    </location>
</feature>
<feature type="transmembrane region" description="Helical" evidence="2">
    <location>
        <begin position="351"/>
        <end position="371"/>
    </location>
</feature>
<feature type="domain" description="4Fe-4S ferredoxin-type 1">
    <location>
        <begin position="455"/>
        <end position="485"/>
    </location>
</feature>
<feature type="domain" description="4Fe-4S ferredoxin-type 2">
    <location>
        <begin position="501"/>
        <end position="530"/>
    </location>
</feature>
<feature type="region of interest" description="NADH-quinone oxidoreductase subunit H">
    <location>
        <begin position="1"/>
        <end position="405"/>
    </location>
</feature>
<feature type="region of interest" description="NADH-quinone oxidoreductase subunit I">
    <location>
        <begin position="406"/>
        <end position="597"/>
    </location>
</feature>
<feature type="binding site" evidence="1">
    <location>
        <position position="465"/>
    </location>
    <ligand>
        <name>[4Fe-4S] cluster</name>
        <dbReference type="ChEBI" id="CHEBI:49883"/>
        <label>1</label>
    </ligand>
</feature>
<feature type="binding site" evidence="1">
    <location>
        <position position="468"/>
    </location>
    <ligand>
        <name>[4Fe-4S] cluster</name>
        <dbReference type="ChEBI" id="CHEBI:49883"/>
        <label>1</label>
    </ligand>
</feature>
<feature type="binding site" evidence="1">
    <location>
        <position position="471"/>
    </location>
    <ligand>
        <name>[4Fe-4S] cluster</name>
        <dbReference type="ChEBI" id="CHEBI:49883"/>
        <label>1</label>
    </ligand>
</feature>
<feature type="binding site" evidence="1">
    <location>
        <position position="475"/>
    </location>
    <ligand>
        <name>[4Fe-4S] cluster</name>
        <dbReference type="ChEBI" id="CHEBI:49883"/>
        <label>2</label>
    </ligand>
</feature>
<feature type="binding site" evidence="1">
    <location>
        <position position="510"/>
    </location>
    <ligand>
        <name>[4Fe-4S] cluster</name>
        <dbReference type="ChEBI" id="CHEBI:49883"/>
        <label>2</label>
    </ligand>
</feature>
<feature type="binding site" evidence="1">
    <location>
        <position position="513"/>
    </location>
    <ligand>
        <name>[4Fe-4S] cluster</name>
        <dbReference type="ChEBI" id="CHEBI:49883"/>
        <label>2</label>
    </ligand>
</feature>
<feature type="binding site" evidence="1">
    <location>
        <position position="516"/>
    </location>
    <ligand>
        <name>[4Fe-4S] cluster</name>
        <dbReference type="ChEBI" id="CHEBI:49883"/>
        <label>2</label>
    </ligand>
</feature>
<feature type="binding site" evidence="1">
    <location>
        <position position="520"/>
    </location>
    <ligand>
        <name>[4Fe-4S] cluster</name>
        <dbReference type="ChEBI" id="CHEBI:49883"/>
        <label>1</label>
    </ligand>
</feature>
<protein>
    <recommendedName>
        <fullName>NADH-quinone oxidoreductase subunits H/I</fullName>
        <ecNumber>7.1.1.-</ecNumber>
    </recommendedName>
    <alternativeName>
        <fullName>NADH dehydrogenase I subunits H/I</fullName>
    </alternativeName>
    <alternativeName>
        <fullName>NDH-1 subunit H/I</fullName>
    </alternativeName>
</protein>
<comment type="function">
    <text evidence="1">NDH-1 shuttles electrons from NADH, via FMN and iron-sulfur (Fe-S) centers, to quinones in the respiratory chain. The immediate electron acceptor for the enzyme in this species is believed to be ubiquinone. Couples the redox reaction to proton translocation (for every two electrons transferred, four hydrogen ions are translocated across the cytoplasmic membrane), and thus conserves the redox energy in a proton gradient. This subunit may bind ubiquinone.</text>
</comment>
<comment type="catalytic activity">
    <reaction>
        <text>a quinone + NADH + 5 H(+)(in) = a quinol + NAD(+) + 4 H(+)(out)</text>
        <dbReference type="Rhea" id="RHEA:57888"/>
        <dbReference type="ChEBI" id="CHEBI:15378"/>
        <dbReference type="ChEBI" id="CHEBI:24646"/>
        <dbReference type="ChEBI" id="CHEBI:57540"/>
        <dbReference type="ChEBI" id="CHEBI:57945"/>
        <dbReference type="ChEBI" id="CHEBI:132124"/>
    </reaction>
</comment>
<comment type="cofactor">
    <cofactor evidence="1">
        <name>[4Fe-4S] cluster</name>
        <dbReference type="ChEBI" id="CHEBI:49883"/>
    </cofactor>
    <text evidence="1">Binds 2 [4Fe-4S] clusters per subunit.</text>
</comment>
<comment type="subunit">
    <text evidence="1">NDH-1 is composed of 13 different subunits. Subunits NuoA, H/I, J, K, L, M, N constitute the membrane sector of the complex (By similarity).</text>
</comment>
<comment type="subcellular location">
    <subcellularLocation>
        <location evidence="3">Cell membrane</location>
        <topology evidence="3">Multi-pass membrane protein</topology>
    </subcellularLocation>
</comment>
<comment type="similarity">
    <text evidence="3">In the N-terminal section; belongs to the complex I subunit 1 family.</text>
</comment>
<comment type="similarity">
    <text evidence="3">In the C-terminal section; belongs to the complex I 23 kDa subunit family.</text>
</comment>